<sequence length="152" mass="16969">MTIWVDADACPNVIKEILYRAAERMQMPLVLVANQSLRVPPSRFIRTLRVAAGFDVADNEIVRQCEAGDLVITADIPLAAEAIEKGAAALNPRGERYTPATIRERLTMRDFMDTLRASGIQTGGPDSLSQRDRQAFAAELEKWWLEVQRSRG</sequence>
<protein>
    <recommendedName>
        <fullName evidence="1">UPF0178 protein YaiI</fullName>
    </recommendedName>
</protein>
<gene>
    <name evidence="1" type="primary">yaiI</name>
    <name type="ordered locus">ECH74115_0461</name>
</gene>
<feature type="chain" id="PRO_1000126185" description="UPF0178 protein YaiI">
    <location>
        <begin position="1"/>
        <end position="152"/>
    </location>
</feature>
<reference key="1">
    <citation type="journal article" date="2011" name="Proc. Natl. Acad. Sci. U.S.A.">
        <title>Genomic anatomy of Escherichia coli O157:H7 outbreaks.</title>
        <authorList>
            <person name="Eppinger M."/>
            <person name="Mammel M.K."/>
            <person name="Leclerc J.E."/>
            <person name="Ravel J."/>
            <person name="Cebula T.A."/>
        </authorList>
    </citation>
    <scope>NUCLEOTIDE SEQUENCE [LARGE SCALE GENOMIC DNA]</scope>
    <source>
        <strain>EC4115 / EHEC</strain>
    </source>
</reference>
<dbReference type="EMBL" id="CP001164">
    <property type="protein sequence ID" value="ACI34769.1"/>
    <property type="molecule type" value="Genomic_DNA"/>
</dbReference>
<dbReference type="RefSeq" id="WP_000158159.1">
    <property type="nucleotide sequence ID" value="NC_011353.1"/>
</dbReference>
<dbReference type="KEGG" id="ecf:ECH74115_0461"/>
<dbReference type="HOGENOM" id="CLU_106619_2_1_6"/>
<dbReference type="CDD" id="cd18720">
    <property type="entry name" value="PIN_YqxD-like"/>
    <property type="match status" value="1"/>
</dbReference>
<dbReference type="HAMAP" id="MF_00489">
    <property type="entry name" value="UPF0178"/>
    <property type="match status" value="1"/>
</dbReference>
<dbReference type="InterPro" id="IPR003791">
    <property type="entry name" value="UPF0178"/>
</dbReference>
<dbReference type="NCBIfam" id="NF001095">
    <property type="entry name" value="PRK00124.1"/>
    <property type="match status" value="1"/>
</dbReference>
<dbReference type="PANTHER" id="PTHR35146">
    <property type="entry name" value="UPF0178 PROTEIN YAII"/>
    <property type="match status" value="1"/>
</dbReference>
<dbReference type="PANTHER" id="PTHR35146:SF1">
    <property type="entry name" value="UPF0178 PROTEIN YAII"/>
    <property type="match status" value="1"/>
</dbReference>
<dbReference type="Pfam" id="PF02639">
    <property type="entry name" value="DUF188"/>
    <property type="match status" value="1"/>
</dbReference>
<evidence type="ECO:0000255" key="1">
    <source>
        <dbReference type="HAMAP-Rule" id="MF_00489"/>
    </source>
</evidence>
<name>YAII_ECO5E</name>
<organism>
    <name type="scientific">Escherichia coli O157:H7 (strain EC4115 / EHEC)</name>
    <dbReference type="NCBI Taxonomy" id="444450"/>
    <lineage>
        <taxon>Bacteria</taxon>
        <taxon>Pseudomonadati</taxon>
        <taxon>Pseudomonadota</taxon>
        <taxon>Gammaproteobacteria</taxon>
        <taxon>Enterobacterales</taxon>
        <taxon>Enterobacteriaceae</taxon>
        <taxon>Escherichia</taxon>
    </lineage>
</organism>
<accession>B5Z2T9</accession>
<comment type="similarity">
    <text evidence="1">Belongs to the UPF0178 family.</text>
</comment>
<proteinExistence type="inferred from homology"/>